<protein>
    <recommendedName>
        <fullName evidence="1">4-hydroxy-tetrahydrodipicolinate synthase</fullName>
        <shortName evidence="1">HTPA synthase</shortName>
        <ecNumber evidence="1">4.3.3.7</ecNumber>
    </recommendedName>
</protein>
<dbReference type="EC" id="4.3.3.7" evidence="1"/>
<dbReference type="EMBL" id="CP001661">
    <property type="protein sequence ID" value="ACT20159.1"/>
    <property type="molecule type" value="Genomic_DNA"/>
</dbReference>
<dbReference type="SMR" id="C6E9Q9"/>
<dbReference type="STRING" id="443144.GM21_4144"/>
<dbReference type="KEGG" id="gem:GM21_4144"/>
<dbReference type="eggNOG" id="COG0329">
    <property type="taxonomic scope" value="Bacteria"/>
</dbReference>
<dbReference type="HOGENOM" id="CLU_049343_7_1_7"/>
<dbReference type="OrthoDB" id="9782828at2"/>
<dbReference type="UniPathway" id="UPA00034">
    <property type="reaction ID" value="UER00017"/>
</dbReference>
<dbReference type="GO" id="GO:0005829">
    <property type="term" value="C:cytosol"/>
    <property type="evidence" value="ECO:0007669"/>
    <property type="project" value="TreeGrafter"/>
</dbReference>
<dbReference type="GO" id="GO:0008840">
    <property type="term" value="F:4-hydroxy-tetrahydrodipicolinate synthase activity"/>
    <property type="evidence" value="ECO:0007669"/>
    <property type="project" value="UniProtKB-UniRule"/>
</dbReference>
<dbReference type="GO" id="GO:0019877">
    <property type="term" value="P:diaminopimelate biosynthetic process"/>
    <property type="evidence" value="ECO:0007669"/>
    <property type="project" value="UniProtKB-UniRule"/>
</dbReference>
<dbReference type="GO" id="GO:0009089">
    <property type="term" value="P:lysine biosynthetic process via diaminopimelate"/>
    <property type="evidence" value="ECO:0007669"/>
    <property type="project" value="UniProtKB-UniRule"/>
</dbReference>
<dbReference type="CDD" id="cd00950">
    <property type="entry name" value="DHDPS"/>
    <property type="match status" value="1"/>
</dbReference>
<dbReference type="Gene3D" id="3.20.20.70">
    <property type="entry name" value="Aldolase class I"/>
    <property type="match status" value="1"/>
</dbReference>
<dbReference type="HAMAP" id="MF_00418">
    <property type="entry name" value="DapA"/>
    <property type="match status" value="1"/>
</dbReference>
<dbReference type="InterPro" id="IPR013785">
    <property type="entry name" value="Aldolase_TIM"/>
</dbReference>
<dbReference type="InterPro" id="IPR005263">
    <property type="entry name" value="DapA"/>
</dbReference>
<dbReference type="InterPro" id="IPR002220">
    <property type="entry name" value="DapA-like"/>
</dbReference>
<dbReference type="InterPro" id="IPR020625">
    <property type="entry name" value="Schiff_base-form_aldolases_AS"/>
</dbReference>
<dbReference type="InterPro" id="IPR020624">
    <property type="entry name" value="Schiff_base-form_aldolases_CS"/>
</dbReference>
<dbReference type="NCBIfam" id="TIGR00674">
    <property type="entry name" value="dapA"/>
    <property type="match status" value="1"/>
</dbReference>
<dbReference type="PANTHER" id="PTHR12128:SF66">
    <property type="entry name" value="4-HYDROXY-2-OXOGLUTARATE ALDOLASE, MITOCHONDRIAL"/>
    <property type="match status" value="1"/>
</dbReference>
<dbReference type="PANTHER" id="PTHR12128">
    <property type="entry name" value="DIHYDRODIPICOLINATE SYNTHASE"/>
    <property type="match status" value="1"/>
</dbReference>
<dbReference type="Pfam" id="PF00701">
    <property type="entry name" value="DHDPS"/>
    <property type="match status" value="1"/>
</dbReference>
<dbReference type="PIRSF" id="PIRSF001365">
    <property type="entry name" value="DHDPS"/>
    <property type="match status" value="1"/>
</dbReference>
<dbReference type="PRINTS" id="PR00146">
    <property type="entry name" value="DHPICSNTHASE"/>
</dbReference>
<dbReference type="SMART" id="SM01130">
    <property type="entry name" value="DHDPS"/>
    <property type="match status" value="1"/>
</dbReference>
<dbReference type="SUPFAM" id="SSF51569">
    <property type="entry name" value="Aldolase"/>
    <property type="match status" value="1"/>
</dbReference>
<dbReference type="PROSITE" id="PS00665">
    <property type="entry name" value="DHDPS_1"/>
    <property type="match status" value="1"/>
</dbReference>
<dbReference type="PROSITE" id="PS00666">
    <property type="entry name" value="DHDPS_2"/>
    <property type="match status" value="1"/>
</dbReference>
<organism>
    <name type="scientific">Geobacter sp. (strain M21)</name>
    <dbReference type="NCBI Taxonomy" id="443144"/>
    <lineage>
        <taxon>Bacteria</taxon>
        <taxon>Pseudomonadati</taxon>
        <taxon>Thermodesulfobacteriota</taxon>
        <taxon>Desulfuromonadia</taxon>
        <taxon>Geobacterales</taxon>
        <taxon>Geobacteraceae</taxon>
        <taxon>Geobacter</taxon>
    </lineage>
</organism>
<keyword id="KW-0028">Amino-acid biosynthesis</keyword>
<keyword id="KW-0963">Cytoplasm</keyword>
<keyword id="KW-0220">Diaminopimelate biosynthesis</keyword>
<keyword id="KW-0456">Lyase</keyword>
<keyword id="KW-0457">Lysine biosynthesis</keyword>
<keyword id="KW-0704">Schiff base</keyword>
<evidence type="ECO:0000255" key="1">
    <source>
        <dbReference type="HAMAP-Rule" id="MF_00418"/>
    </source>
</evidence>
<evidence type="ECO:0000305" key="2"/>
<proteinExistence type="inferred from homology"/>
<comment type="function">
    <text evidence="1">Catalyzes the condensation of (S)-aspartate-beta-semialdehyde [(S)-ASA] and pyruvate to 4-hydroxy-tetrahydrodipicolinate (HTPA).</text>
</comment>
<comment type="catalytic activity">
    <reaction evidence="1">
        <text>L-aspartate 4-semialdehyde + pyruvate = (2S,4S)-4-hydroxy-2,3,4,5-tetrahydrodipicolinate + H2O + H(+)</text>
        <dbReference type="Rhea" id="RHEA:34171"/>
        <dbReference type="ChEBI" id="CHEBI:15361"/>
        <dbReference type="ChEBI" id="CHEBI:15377"/>
        <dbReference type="ChEBI" id="CHEBI:15378"/>
        <dbReference type="ChEBI" id="CHEBI:67139"/>
        <dbReference type="ChEBI" id="CHEBI:537519"/>
        <dbReference type="EC" id="4.3.3.7"/>
    </reaction>
</comment>
<comment type="pathway">
    <text evidence="1">Amino-acid biosynthesis; L-lysine biosynthesis via DAP pathway; (S)-tetrahydrodipicolinate from L-aspartate: step 3/4.</text>
</comment>
<comment type="subunit">
    <text evidence="1">Homotetramer; dimer of dimers.</text>
</comment>
<comment type="subcellular location">
    <subcellularLocation>
        <location evidence="1">Cytoplasm</location>
    </subcellularLocation>
</comment>
<comment type="similarity">
    <text evidence="1">Belongs to the DapA family.</text>
</comment>
<comment type="caution">
    <text evidence="2">Was originally thought to be a dihydrodipicolinate synthase (DHDPS), catalyzing the condensation of (S)-aspartate-beta-semialdehyde [(S)-ASA] and pyruvate to dihydrodipicolinate (DHDP). However, it was shown in E.coli that the product of the enzymatic reaction is not dihydrodipicolinate but in fact (4S)-4-hydroxy-2,3,4,5-tetrahydro-(2S)-dipicolinic acid (HTPA), and that the consecutive dehydration reaction leading to DHDP is not spontaneous but catalyzed by DapB.</text>
</comment>
<feature type="chain" id="PRO_1000206032" description="4-hydroxy-tetrahydrodipicolinate synthase">
    <location>
        <begin position="1"/>
        <end position="290"/>
    </location>
</feature>
<feature type="active site" description="Proton donor/acceptor" evidence="1">
    <location>
        <position position="132"/>
    </location>
</feature>
<feature type="active site" description="Schiff-base intermediate with substrate" evidence="1">
    <location>
        <position position="160"/>
    </location>
</feature>
<feature type="binding site" evidence="1">
    <location>
        <position position="44"/>
    </location>
    <ligand>
        <name>pyruvate</name>
        <dbReference type="ChEBI" id="CHEBI:15361"/>
    </ligand>
</feature>
<feature type="binding site" evidence="1">
    <location>
        <position position="202"/>
    </location>
    <ligand>
        <name>pyruvate</name>
        <dbReference type="ChEBI" id="CHEBI:15361"/>
    </ligand>
</feature>
<feature type="site" description="Part of a proton relay during catalysis" evidence="1">
    <location>
        <position position="43"/>
    </location>
</feature>
<feature type="site" description="Part of a proton relay during catalysis" evidence="1">
    <location>
        <position position="106"/>
    </location>
</feature>
<name>DAPA_GEOSM</name>
<gene>
    <name evidence="1" type="primary">dapA</name>
    <name type="ordered locus">GM21_4144</name>
</gene>
<reference key="1">
    <citation type="submission" date="2009-07" db="EMBL/GenBank/DDBJ databases">
        <title>Complete sequence of Geobacter sp. M21.</title>
        <authorList>
            <consortium name="US DOE Joint Genome Institute"/>
            <person name="Lucas S."/>
            <person name="Copeland A."/>
            <person name="Lapidus A."/>
            <person name="Glavina del Rio T."/>
            <person name="Dalin E."/>
            <person name="Tice H."/>
            <person name="Bruce D."/>
            <person name="Goodwin L."/>
            <person name="Pitluck S."/>
            <person name="Saunders E."/>
            <person name="Brettin T."/>
            <person name="Detter J.C."/>
            <person name="Han C."/>
            <person name="Larimer F."/>
            <person name="Land M."/>
            <person name="Hauser L."/>
            <person name="Kyrpides N."/>
            <person name="Ovchinnikova G."/>
            <person name="Lovley D."/>
        </authorList>
    </citation>
    <scope>NUCLEOTIDE SEQUENCE [LARGE SCALE GENOMIC DNA]</scope>
    <source>
        <strain>M21</strain>
    </source>
</reference>
<accession>C6E9Q9</accession>
<sequence>MFQGSIVAIVTPFKNGAVDEEKLRELVEFQIENGTDAIVPCGTTGESSTLSYVEHDRVIQVVVEQVNKRVPVIAGTGSNSTHEAIEITQHAKELGADGALLVTPYYNKPSQEGLFRHYKAVADAVALPQILYNVPGRTGVNLLPETVARLSVHQNIVAIKEATGSLQQASEVLALCGDKIDVLSGDDFITLPIMAAGGKGVISVTANIMPKEVSSLVDAFNAGNLEEARRLHLYLLKISNAMFIESNPVPVKAAVSLMGKCSSEVRLPLAPLMEANLAKLTAIMKEYKLI</sequence>